<feature type="chain" id="PRO_0000149335" description="DNA-directed RNA polymerase subunit Rpo11">
    <location>
        <begin position="1"/>
        <end position="95"/>
    </location>
</feature>
<feature type="strand" evidence="2">
    <location>
        <begin position="2"/>
        <end position="9"/>
    </location>
</feature>
<feature type="strand" evidence="2">
    <location>
        <begin position="12"/>
        <end position="18"/>
    </location>
</feature>
<feature type="helix" evidence="2">
    <location>
        <begin position="22"/>
        <end position="32"/>
    </location>
</feature>
<feature type="strand" evidence="2">
    <location>
        <begin position="38"/>
        <end position="44"/>
    </location>
</feature>
<feature type="turn" evidence="2">
    <location>
        <begin position="48"/>
        <end position="53"/>
    </location>
</feature>
<feature type="strand" evidence="2">
    <location>
        <begin position="56"/>
        <end position="61"/>
    </location>
</feature>
<feature type="strand" evidence="2">
    <location>
        <begin position="63"/>
        <end position="65"/>
    </location>
</feature>
<feature type="helix" evidence="2">
    <location>
        <begin position="67"/>
        <end position="93"/>
    </location>
</feature>
<accession>Q8U4N1</accession>
<gene>
    <name evidence="1" type="primary">rpo11</name>
    <name evidence="1" type="synonym">rpoL</name>
    <name type="ordered locus">PF0050</name>
</gene>
<proteinExistence type="evidence at protein level"/>
<reference key="1">
    <citation type="journal article" date="1999" name="Genetics">
        <title>Divergence of the hyperthermophilic archaea Pyrococcus furiosus and P. horikoshii inferred from complete genomic sequences.</title>
        <authorList>
            <person name="Maeder D.L."/>
            <person name="Weiss R.B."/>
            <person name="Dunn D.M."/>
            <person name="Cherry J.L."/>
            <person name="Gonzalez J.M."/>
            <person name="DiRuggiero J."/>
            <person name="Robb F.T."/>
        </authorList>
    </citation>
    <scope>NUCLEOTIDE SEQUENCE [LARGE SCALE GENOMIC DNA]</scope>
    <source>
        <strain>ATCC 43587 / DSM 3638 / JCM 8422 / Vc1</strain>
    </source>
</reference>
<organism>
    <name type="scientific">Pyrococcus furiosus (strain ATCC 43587 / DSM 3638 / JCM 8422 / Vc1)</name>
    <dbReference type="NCBI Taxonomy" id="186497"/>
    <lineage>
        <taxon>Archaea</taxon>
        <taxon>Methanobacteriati</taxon>
        <taxon>Methanobacteriota</taxon>
        <taxon>Thermococci</taxon>
        <taxon>Thermococcales</taxon>
        <taxon>Thermococcaceae</taxon>
        <taxon>Pyrococcus</taxon>
    </lineage>
</organism>
<comment type="function">
    <text evidence="1">DNA-dependent RNA polymerase (RNAP) catalyzes the transcription of DNA into RNA using the four ribonucleoside triphosphates as substrates.</text>
</comment>
<comment type="catalytic activity">
    <reaction evidence="1">
        <text>RNA(n) + a ribonucleoside 5'-triphosphate = RNA(n+1) + diphosphate</text>
        <dbReference type="Rhea" id="RHEA:21248"/>
        <dbReference type="Rhea" id="RHEA-COMP:14527"/>
        <dbReference type="Rhea" id="RHEA-COMP:17342"/>
        <dbReference type="ChEBI" id="CHEBI:33019"/>
        <dbReference type="ChEBI" id="CHEBI:61557"/>
        <dbReference type="ChEBI" id="CHEBI:140395"/>
        <dbReference type="EC" id="2.7.7.6"/>
    </reaction>
</comment>
<comment type="subunit">
    <text evidence="1">Part of the RNA polymerase complex.</text>
</comment>
<comment type="subcellular location">
    <subcellularLocation>
        <location evidence="1">Cytoplasm</location>
    </subcellularLocation>
</comment>
<comment type="similarity">
    <text evidence="1">Belongs to the archaeal Rpo11/eukaryotic RPB11/RPC19 RNA polymerase subunit family.</text>
</comment>
<name>RPO11_PYRFU</name>
<evidence type="ECO:0000255" key="1">
    <source>
        <dbReference type="HAMAP-Rule" id="MF_00261"/>
    </source>
</evidence>
<evidence type="ECO:0007829" key="2">
    <source>
        <dbReference type="PDB" id="8RBO"/>
    </source>
</evidence>
<sequence>MKIEVIKKEENLLEFYLEGEDHTFANLLVETLRENPHVKFTAYTIEHPITMARKPRFRVVTDGEITPEEALEEAAKKIFERAKEVLEAWEKAVKS</sequence>
<keyword id="KW-0002">3D-structure</keyword>
<keyword id="KW-0963">Cytoplasm</keyword>
<keyword id="KW-0240">DNA-directed RNA polymerase</keyword>
<keyword id="KW-0548">Nucleotidyltransferase</keyword>
<keyword id="KW-1185">Reference proteome</keyword>
<keyword id="KW-0804">Transcription</keyword>
<keyword id="KW-0808">Transferase</keyword>
<protein>
    <recommendedName>
        <fullName evidence="1">DNA-directed RNA polymerase subunit Rpo11</fullName>
        <ecNumber evidence="1">2.7.7.6</ecNumber>
    </recommendedName>
    <alternativeName>
        <fullName evidence="1">DNA-directed RNA polymerase subunit L</fullName>
    </alternativeName>
</protein>
<dbReference type="EC" id="2.7.7.6" evidence="1"/>
<dbReference type="EMBL" id="AE009950">
    <property type="protein sequence ID" value="AAL80174.1"/>
    <property type="molecule type" value="Genomic_DNA"/>
</dbReference>
<dbReference type="RefSeq" id="WP_011011162.1">
    <property type="nucleotide sequence ID" value="NZ_CP023154.1"/>
</dbReference>
<dbReference type="PDB" id="8CRO">
    <property type="method" value="EM"/>
    <property type="resolution" value="3.10 A"/>
    <property type="chains" value="L=1-95"/>
</dbReference>
<dbReference type="PDB" id="8OKI">
    <property type="method" value="EM"/>
    <property type="resolution" value="3.45 A"/>
    <property type="chains" value="L=1-95"/>
</dbReference>
<dbReference type="PDB" id="8ORQ">
    <property type="method" value="EM"/>
    <property type="resolution" value="3.20 A"/>
    <property type="chains" value="L=1-95"/>
</dbReference>
<dbReference type="PDB" id="8P2I">
    <property type="method" value="EM"/>
    <property type="resolution" value="3.40 A"/>
    <property type="chains" value="L=1-95"/>
</dbReference>
<dbReference type="PDB" id="8RBO">
    <property type="method" value="EM"/>
    <property type="resolution" value="3.02 A"/>
    <property type="chains" value="L=1-95"/>
</dbReference>
<dbReference type="PDBsum" id="8CRO"/>
<dbReference type="PDBsum" id="8OKI"/>
<dbReference type="PDBsum" id="8ORQ"/>
<dbReference type="PDBsum" id="8P2I"/>
<dbReference type="PDBsum" id="8RBO"/>
<dbReference type="EMDB" id="EMD-16809"/>
<dbReference type="EMDB" id="EMD-16929"/>
<dbReference type="EMDB" id="EMD-17130"/>
<dbReference type="EMDB" id="EMD-17366"/>
<dbReference type="EMDB" id="EMD-19033"/>
<dbReference type="SMR" id="Q8U4N1"/>
<dbReference type="IntAct" id="Q8U4N1">
    <property type="interactions" value="1"/>
</dbReference>
<dbReference type="MINT" id="Q8U4N1"/>
<dbReference type="STRING" id="186497.PF0050"/>
<dbReference type="PaxDb" id="186497-PF0050"/>
<dbReference type="KEGG" id="pfu:PF0050"/>
<dbReference type="PATRIC" id="fig|186497.12.peg.54"/>
<dbReference type="eggNOG" id="arCOG04111">
    <property type="taxonomic scope" value="Archaea"/>
</dbReference>
<dbReference type="HOGENOM" id="CLU_090381_5_0_2"/>
<dbReference type="OrthoDB" id="24205at2157"/>
<dbReference type="PhylomeDB" id="Q8U4N1"/>
<dbReference type="Proteomes" id="UP000001013">
    <property type="component" value="Chromosome"/>
</dbReference>
<dbReference type="GO" id="GO:0005737">
    <property type="term" value="C:cytoplasm"/>
    <property type="evidence" value="ECO:0007669"/>
    <property type="project" value="UniProtKB-SubCell"/>
</dbReference>
<dbReference type="GO" id="GO:0000428">
    <property type="term" value="C:DNA-directed RNA polymerase complex"/>
    <property type="evidence" value="ECO:0007669"/>
    <property type="project" value="UniProtKB-KW"/>
</dbReference>
<dbReference type="GO" id="GO:0003677">
    <property type="term" value="F:DNA binding"/>
    <property type="evidence" value="ECO:0007669"/>
    <property type="project" value="InterPro"/>
</dbReference>
<dbReference type="GO" id="GO:0003899">
    <property type="term" value="F:DNA-directed RNA polymerase activity"/>
    <property type="evidence" value="ECO:0007669"/>
    <property type="project" value="UniProtKB-UniRule"/>
</dbReference>
<dbReference type="GO" id="GO:0046983">
    <property type="term" value="F:protein dimerization activity"/>
    <property type="evidence" value="ECO:0007669"/>
    <property type="project" value="InterPro"/>
</dbReference>
<dbReference type="GO" id="GO:0006351">
    <property type="term" value="P:DNA-templated transcription"/>
    <property type="evidence" value="ECO:0007669"/>
    <property type="project" value="UniProtKB-UniRule"/>
</dbReference>
<dbReference type="CDD" id="cd06927">
    <property type="entry name" value="RNAP_L"/>
    <property type="match status" value="1"/>
</dbReference>
<dbReference type="Gene3D" id="3.30.1360.10">
    <property type="entry name" value="RNA polymerase, RBP11-like subunit"/>
    <property type="match status" value="1"/>
</dbReference>
<dbReference type="HAMAP" id="MF_00261">
    <property type="entry name" value="RNApol_arch_Rpo11"/>
    <property type="match status" value="1"/>
</dbReference>
<dbReference type="InterPro" id="IPR036603">
    <property type="entry name" value="RBP11-like"/>
</dbReference>
<dbReference type="InterPro" id="IPR009025">
    <property type="entry name" value="RBP11-like_dimer"/>
</dbReference>
<dbReference type="InterPro" id="IPR008193">
    <property type="entry name" value="RNA_pol_Rpb11_13-16kDa_CS"/>
</dbReference>
<dbReference type="InterPro" id="IPR022905">
    <property type="entry name" value="Rpo11-like"/>
</dbReference>
<dbReference type="NCBIfam" id="NF002235">
    <property type="entry name" value="PRK01146.1-3"/>
    <property type="match status" value="1"/>
</dbReference>
<dbReference type="PANTHER" id="PTHR13946">
    <property type="entry name" value="DNA-DIRECTED RNA POLYMERASE I,II,III"/>
    <property type="match status" value="1"/>
</dbReference>
<dbReference type="PANTHER" id="PTHR13946:SF28">
    <property type="entry name" value="DNA-DIRECTED RNA POLYMERASES I AND III SUBUNIT RPAC2"/>
    <property type="match status" value="1"/>
</dbReference>
<dbReference type="Pfam" id="PF13656">
    <property type="entry name" value="RNA_pol_L_2"/>
    <property type="match status" value="1"/>
</dbReference>
<dbReference type="SUPFAM" id="SSF55257">
    <property type="entry name" value="RBP11-like subunits of RNA polymerase"/>
    <property type="match status" value="1"/>
</dbReference>
<dbReference type="PROSITE" id="PS01154">
    <property type="entry name" value="RNA_POL_L_13KD"/>
    <property type="match status" value="1"/>
</dbReference>